<gene>
    <name type="primary">mreC</name>
    <name type="ordered locus">b3250</name>
    <name type="ordered locus">JW3219</name>
</gene>
<reference key="1">
    <citation type="journal article" date="1989" name="J. Bacteriol.">
        <title>New mre genes mreC and mreD, responsible for formation of the rod shape of Escherichia coli cells.</title>
        <authorList>
            <person name="Wachi M."/>
            <person name="Doi M."/>
            <person name="Okada Y."/>
            <person name="Matsuhashi M."/>
        </authorList>
    </citation>
    <scope>NUCLEOTIDE SEQUENCE [GENOMIC DNA]</scope>
    <scope>FUNCTION</scope>
    <source>
        <strain>K12 / JM109 / ATCC 53323</strain>
    </source>
</reference>
<reference key="2">
    <citation type="journal article" date="1997" name="Science">
        <title>The complete genome sequence of Escherichia coli K-12.</title>
        <authorList>
            <person name="Blattner F.R."/>
            <person name="Plunkett G. III"/>
            <person name="Bloch C.A."/>
            <person name="Perna N.T."/>
            <person name="Burland V."/>
            <person name="Riley M."/>
            <person name="Collado-Vides J."/>
            <person name="Glasner J.D."/>
            <person name="Rode C.K."/>
            <person name="Mayhew G.F."/>
            <person name="Gregor J."/>
            <person name="Davis N.W."/>
            <person name="Kirkpatrick H.A."/>
            <person name="Goeden M.A."/>
            <person name="Rose D.J."/>
            <person name="Mau B."/>
            <person name="Shao Y."/>
        </authorList>
    </citation>
    <scope>NUCLEOTIDE SEQUENCE [LARGE SCALE GENOMIC DNA]</scope>
    <source>
        <strain>K12 / MG1655 / ATCC 47076</strain>
    </source>
</reference>
<reference key="3">
    <citation type="journal article" date="2006" name="Mol. Syst. Biol.">
        <title>Highly accurate genome sequences of Escherichia coli K-12 strains MG1655 and W3110.</title>
        <authorList>
            <person name="Hayashi K."/>
            <person name="Morooka N."/>
            <person name="Yamamoto Y."/>
            <person name="Fujita K."/>
            <person name="Isono K."/>
            <person name="Choi S."/>
            <person name="Ohtsubo E."/>
            <person name="Baba T."/>
            <person name="Wanner B.L."/>
            <person name="Mori H."/>
            <person name="Horiuchi T."/>
        </authorList>
    </citation>
    <scope>NUCLEOTIDE SEQUENCE [LARGE SCALE GENOMIC DNA]</scope>
    <source>
        <strain>K12 / W3110 / ATCC 27325 / DSM 5911</strain>
    </source>
</reference>
<reference key="4">
    <citation type="journal article" date="1988" name="J. Bacteriol.">
        <title>Determinations of the DNA sequence of the mreB gene and of the gene products of the mre region that function in formation of the rod shape of Escherichia coli cells.</title>
        <authorList>
            <person name="Doi M."/>
            <person name="Wachi M."/>
            <person name="Ishino F."/>
            <person name="Tomioka S."/>
            <person name="Ito M."/>
            <person name="Sakagami Y."/>
            <person name="Suzuki A."/>
            <person name="Matsuhashi M."/>
        </authorList>
    </citation>
    <scope>NUCLEOTIDE SEQUENCE [GENOMIC DNA] OF 1-128</scope>
    <source>
        <strain>K12 / JM109 / ATCC 53323</strain>
    </source>
</reference>
<reference key="5">
    <citation type="journal article" date="2005" name="Mol. Microbiol.">
        <title>The morphogenetic MreBCD proteins of Escherichia coli form an essential membrane-bound complex.</title>
        <authorList>
            <person name="Kruse T."/>
            <person name="Bork-Jensen J."/>
            <person name="Gerdes K."/>
        </authorList>
    </citation>
    <scope>FUNCTION</scope>
    <scope>SELF-ASSOCIATION</scope>
    <scope>INTERACTION WITH MREB AND MRED</scope>
    <scope>SUBCELLULAR LOCATION</scope>
    <scope>DISRUPTION PHENOTYPE</scope>
</reference>
<organism>
    <name type="scientific">Escherichia coli (strain K12)</name>
    <dbReference type="NCBI Taxonomy" id="83333"/>
    <lineage>
        <taxon>Bacteria</taxon>
        <taxon>Pseudomonadati</taxon>
        <taxon>Pseudomonadota</taxon>
        <taxon>Gammaproteobacteria</taxon>
        <taxon>Enterobacterales</taxon>
        <taxon>Enterobacteriaceae</taxon>
        <taxon>Escherichia</taxon>
    </lineage>
</organism>
<protein>
    <recommendedName>
        <fullName>Cell shape-determining protein MreC</fullName>
    </recommendedName>
    <alternativeName>
        <fullName>Cell shape protein MreC</fullName>
    </alternativeName>
    <alternativeName>
        <fullName>Rod shape-determining protein MreC</fullName>
    </alternativeName>
</protein>
<accession>P16926</accession>
<accession>P13028</accession>
<accession>Q2M8W4</accession>
<dbReference type="EMBL" id="M31792">
    <property type="protein sequence ID" value="AAA24155.1"/>
    <property type="molecule type" value="Genomic_DNA"/>
</dbReference>
<dbReference type="EMBL" id="U18997">
    <property type="protein sequence ID" value="AAA58053.1"/>
    <property type="molecule type" value="Genomic_DNA"/>
</dbReference>
<dbReference type="EMBL" id="U00096">
    <property type="protein sequence ID" value="AAC76282.1"/>
    <property type="molecule type" value="Genomic_DNA"/>
</dbReference>
<dbReference type="EMBL" id="AP009048">
    <property type="protein sequence ID" value="BAE77292.1"/>
    <property type="molecule type" value="Genomic_DNA"/>
</dbReference>
<dbReference type="EMBL" id="M22055">
    <property type="protein sequence ID" value="AAA83892.1"/>
    <property type="molecule type" value="Genomic_DNA"/>
</dbReference>
<dbReference type="PIR" id="JV0059">
    <property type="entry name" value="JV0059"/>
</dbReference>
<dbReference type="RefSeq" id="NP_417716.1">
    <property type="nucleotide sequence ID" value="NC_000913.3"/>
</dbReference>
<dbReference type="RefSeq" id="WP_000802511.1">
    <property type="nucleotide sequence ID" value="NZ_SSZK01000034.1"/>
</dbReference>
<dbReference type="PDB" id="7EFT">
    <property type="method" value="X-ray"/>
    <property type="resolution" value="2.10 A"/>
    <property type="chains" value="A/B=1-367"/>
</dbReference>
<dbReference type="PDBsum" id="7EFT"/>
<dbReference type="SMR" id="P16926"/>
<dbReference type="BioGRID" id="4261941">
    <property type="interactions" value="267"/>
</dbReference>
<dbReference type="ComplexPortal" id="CPX-5718">
    <property type="entry name" value="Elongasome complex"/>
</dbReference>
<dbReference type="DIP" id="DIP-10256N"/>
<dbReference type="FunCoup" id="P16926">
    <property type="interactions" value="475"/>
</dbReference>
<dbReference type="IntAct" id="P16926">
    <property type="interactions" value="5"/>
</dbReference>
<dbReference type="MINT" id="P16926"/>
<dbReference type="STRING" id="511145.b3250"/>
<dbReference type="ChEMBL" id="CHEMBL3309012"/>
<dbReference type="TCDB" id="9.B.157.1.3">
    <property type="family name" value="the cell shape-determining mrebcd (mrebcd) family"/>
</dbReference>
<dbReference type="jPOST" id="P16926"/>
<dbReference type="PaxDb" id="511145-b3250"/>
<dbReference type="EnsemblBacteria" id="AAC76282">
    <property type="protein sequence ID" value="AAC76282"/>
    <property type="gene ID" value="b3250"/>
</dbReference>
<dbReference type="GeneID" id="947655"/>
<dbReference type="KEGG" id="ecj:JW3219"/>
<dbReference type="KEGG" id="eco:b3250"/>
<dbReference type="PATRIC" id="fig|1411691.4.peg.3479"/>
<dbReference type="EchoBASE" id="EB0604"/>
<dbReference type="eggNOG" id="COG1792">
    <property type="taxonomic scope" value="Bacteria"/>
</dbReference>
<dbReference type="HOGENOM" id="CLU_042663_2_0_6"/>
<dbReference type="InParanoid" id="P16926"/>
<dbReference type="OMA" id="RDMTVLN"/>
<dbReference type="OrthoDB" id="9808025at2"/>
<dbReference type="PhylomeDB" id="P16926"/>
<dbReference type="BioCyc" id="EcoCyc:EG10609-MONOMER"/>
<dbReference type="PRO" id="PR:P16926"/>
<dbReference type="Proteomes" id="UP000000625">
    <property type="component" value="Chromosome"/>
</dbReference>
<dbReference type="GO" id="GO:0005886">
    <property type="term" value="C:plasma membrane"/>
    <property type="evidence" value="ECO:0000314"/>
    <property type="project" value="UniProtKB"/>
</dbReference>
<dbReference type="GO" id="GO:0071963">
    <property type="term" value="P:establishment or maintenance of cell polarity regulating cell shape"/>
    <property type="evidence" value="ECO:0000315"/>
    <property type="project" value="UniProtKB"/>
</dbReference>
<dbReference type="GO" id="GO:0009252">
    <property type="term" value="P:peptidoglycan biosynthetic process"/>
    <property type="evidence" value="ECO:0000303"/>
    <property type="project" value="ComplexPortal"/>
</dbReference>
<dbReference type="GO" id="GO:0008360">
    <property type="term" value="P:regulation of cell shape"/>
    <property type="evidence" value="ECO:0000315"/>
    <property type="project" value="EcoCyc"/>
</dbReference>
<dbReference type="FunFam" id="2.40.10.340:FF:000001">
    <property type="entry name" value="Cell shape-determining protein MreC"/>
    <property type="match status" value="1"/>
</dbReference>
<dbReference type="FunFam" id="2.40.10.350:FF:000001">
    <property type="entry name" value="Cell shape-determining protein MreC"/>
    <property type="match status" value="1"/>
</dbReference>
<dbReference type="Gene3D" id="2.40.10.340">
    <property type="entry name" value="Rod shape-determining protein MreC, domain 1"/>
    <property type="match status" value="1"/>
</dbReference>
<dbReference type="Gene3D" id="2.40.10.350">
    <property type="entry name" value="Rod shape-determining protein MreC, domain 2"/>
    <property type="match status" value="1"/>
</dbReference>
<dbReference type="InterPro" id="IPR042177">
    <property type="entry name" value="Cell/Rod_1"/>
</dbReference>
<dbReference type="InterPro" id="IPR042175">
    <property type="entry name" value="Cell/Rod_MreC_2"/>
</dbReference>
<dbReference type="InterPro" id="IPR007221">
    <property type="entry name" value="MreC"/>
</dbReference>
<dbReference type="InterPro" id="IPR055342">
    <property type="entry name" value="MreC_beta-barrel_core"/>
</dbReference>
<dbReference type="NCBIfam" id="TIGR00219">
    <property type="entry name" value="mreC"/>
    <property type="match status" value="1"/>
</dbReference>
<dbReference type="PANTHER" id="PTHR34138">
    <property type="entry name" value="CELL SHAPE-DETERMINING PROTEIN MREC"/>
    <property type="match status" value="1"/>
</dbReference>
<dbReference type="PANTHER" id="PTHR34138:SF1">
    <property type="entry name" value="CELL SHAPE-DETERMINING PROTEIN MREC"/>
    <property type="match status" value="1"/>
</dbReference>
<dbReference type="Pfam" id="PF04085">
    <property type="entry name" value="MreC"/>
    <property type="match status" value="1"/>
</dbReference>
<feature type="chain" id="PRO_0000062767" description="Cell shape-determining protein MreC">
    <location>
        <begin position="1"/>
        <end position="367"/>
    </location>
</feature>
<feature type="topological domain" description="Cytoplasmic" evidence="1">
    <location>
        <begin position="1"/>
        <end position="12"/>
    </location>
</feature>
<feature type="transmembrane region" description="Helical" evidence="1">
    <location>
        <begin position="13"/>
        <end position="35"/>
    </location>
</feature>
<feature type="topological domain" description="Periplasmic" evidence="1">
    <location>
        <begin position="36"/>
        <end position="367"/>
    </location>
</feature>
<feature type="region of interest" description="Disordered" evidence="2">
    <location>
        <begin position="300"/>
        <end position="367"/>
    </location>
</feature>
<feature type="coiled-coil region" evidence="1">
    <location>
        <begin position="63"/>
        <end position="92"/>
    </location>
</feature>
<feature type="compositionally biased region" description="Low complexity" evidence="2">
    <location>
        <begin position="314"/>
        <end position="344"/>
    </location>
</feature>
<feature type="compositionally biased region" description="Polar residues" evidence="2">
    <location>
        <begin position="345"/>
        <end position="357"/>
    </location>
</feature>
<feature type="helix" evidence="6">
    <location>
        <begin position="76"/>
        <end position="86"/>
    </location>
</feature>
<feature type="helix" evidence="6">
    <location>
        <begin position="88"/>
        <end position="107"/>
    </location>
</feature>
<feature type="strand" evidence="6">
    <location>
        <begin position="117"/>
        <end position="126"/>
    </location>
</feature>
<feature type="strand" evidence="6">
    <location>
        <begin position="134"/>
        <end position="138"/>
    </location>
</feature>
<feature type="helix" evidence="6">
    <location>
        <begin position="141"/>
        <end position="143"/>
    </location>
</feature>
<feature type="strand" evidence="6">
    <location>
        <begin position="150"/>
        <end position="152"/>
    </location>
</feature>
<feature type="strand" evidence="6">
    <location>
        <begin position="154"/>
        <end position="164"/>
    </location>
</feature>
<feature type="strand" evidence="6">
    <location>
        <begin position="169"/>
        <end position="173"/>
    </location>
</feature>
<feature type="strand" evidence="6">
    <location>
        <begin position="180"/>
        <end position="185"/>
    </location>
</feature>
<feature type="turn" evidence="6">
    <location>
        <begin position="186"/>
        <end position="188"/>
    </location>
</feature>
<feature type="strand" evidence="6">
    <location>
        <begin position="191"/>
        <end position="195"/>
    </location>
</feature>
<feature type="strand" evidence="6">
    <location>
        <begin position="203"/>
        <end position="205"/>
    </location>
</feature>
<feature type="strand" evidence="6">
    <location>
        <begin position="219"/>
        <end position="222"/>
    </location>
</feature>
<feature type="strand" evidence="6">
    <location>
        <begin position="227"/>
        <end position="229"/>
    </location>
</feature>
<feature type="strand" evidence="6">
    <location>
        <begin position="234"/>
        <end position="244"/>
    </location>
</feature>
<feature type="turn" evidence="6">
    <location>
        <begin position="245"/>
        <end position="248"/>
    </location>
</feature>
<feature type="strand" evidence="6">
    <location>
        <begin position="249"/>
        <end position="258"/>
    </location>
</feature>
<feature type="strand" evidence="6">
    <location>
        <begin position="265"/>
        <end position="270"/>
    </location>
</feature>
<feature type="helix" evidence="6">
    <location>
        <begin position="282"/>
        <end position="294"/>
    </location>
</feature>
<evidence type="ECO:0000255" key="1"/>
<evidence type="ECO:0000256" key="2">
    <source>
        <dbReference type="SAM" id="MobiDB-lite"/>
    </source>
</evidence>
<evidence type="ECO:0000269" key="3">
    <source>
    </source>
</evidence>
<evidence type="ECO:0000269" key="4">
    <source>
    </source>
</evidence>
<evidence type="ECO:0000305" key="5"/>
<evidence type="ECO:0007829" key="6">
    <source>
        <dbReference type="PDB" id="7EFT"/>
    </source>
</evidence>
<comment type="function">
    <text evidence="3 4">Involved in formation and maintenance of cell shape. Responsible for formation of rod shape. May also contribute to regulation of formation of penicillin-binding proteins.</text>
</comment>
<comment type="subunit">
    <text evidence="3">Self-associates. Interacts with MreB and MreD.</text>
</comment>
<comment type="subcellular location">
    <subcellularLocation>
        <location evidence="3">Cell inner membrane</location>
        <topology evidence="3">Single-pass membrane protein</topology>
    </subcellularLocation>
</comment>
<comment type="disruption phenotype">
    <text evidence="3">Reduction in growth rate and ultimately cell lysis. Growth arrest is associated with remarkable change in cell morphology from the normal rod-shape to enlarged, spherical cells. Many of the large spherical cells lyse at a later stage.</text>
</comment>
<comment type="similarity">
    <text evidence="5">Belongs to the MreC family.</text>
</comment>
<proteinExistence type="evidence at protein level"/>
<keyword id="KW-0002">3D-structure</keyword>
<keyword id="KW-0997">Cell inner membrane</keyword>
<keyword id="KW-1003">Cell membrane</keyword>
<keyword id="KW-0133">Cell shape</keyword>
<keyword id="KW-0175">Coiled coil</keyword>
<keyword id="KW-0472">Membrane</keyword>
<keyword id="KW-1185">Reference proteome</keyword>
<keyword id="KW-0812">Transmembrane</keyword>
<keyword id="KW-1133">Transmembrane helix</keyword>
<name>MREC_ECOLI</name>
<sequence length="367" mass="39530">MKPIFSRGPSLQIRLILAVLVALGIIIADSRLGTFSQIRTYMDTAVSPFYFVSNAPRELLDGVSQTLASRDQLELENRALRQELLLKNSELLMLGQYKQENARLRELLGSPLRQDEQKMVTQVISTVNDPYSDQVVIDKGSVNGVYEGQPVISDKGVVGQVVAVAKLTSRVLLICDATHALPIQVLRNDIRVIAAGNGCTDDLQLEHLPANTDIRVGDVLVTSGLGGRFPEGYPVAVVSSVKLDTQRAYTVIQARPTAGLQRLRYLLLLWGADRNGANPMTPEEVHRVANERLMQMMPQVLPSPDAMGPKLPEPATGIAQPTPQQPATGNAATAPAAPTQPAANRSPQRATPPQSGAQPPARAPGGQ</sequence>